<protein>
    <recommendedName>
        <fullName>Putative ABC transporter ATP-binding protein SACOL2708</fullName>
        <ecNumber>7.-.-.-</ecNumber>
    </recommendedName>
</protein>
<gene>
    <name type="ordered locus">SACOL2708</name>
</gene>
<accession>Q5HCL3</accession>
<reference key="1">
    <citation type="journal article" date="2005" name="J. Bacteriol.">
        <title>Insights on evolution of virulence and resistance from the complete genome analysis of an early methicillin-resistant Staphylococcus aureus strain and a biofilm-producing methicillin-resistant Staphylococcus epidermidis strain.</title>
        <authorList>
            <person name="Gill S.R."/>
            <person name="Fouts D.E."/>
            <person name="Archer G.L."/>
            <person name="Mongodin E.F."/>
            <person name="DeBoy R.T."/>
            <person name="Ravel J."/>
            <person name="Paulsen I.T."/>
            <person name="Kolonay J.F."/>
            <person name="Brinkac L.M."/>
            <person name="Beanan M.J."/>
            <person name="Dodson R.J."/>
            <person name="Daugherty S.C."/>
            <person name="Madupu R."/>
            <person name="Angiuoli S.V."/>
            <person name="Durkin A.S."/>
            <person name="Haft D.H."/>
            <person name="Vamathevan J.J."/>
            <person name="Khouri H."/>
            <person name="Utterback T.R."/>
            <person name="Lee C."/>
            <person name="Dimitrov G."/>
            <person name="Jiang L."/>
            <person name="Qin H."/>
            <person name="Weidman J."/>
            <person name="Tran K."/>
            <person name="Kang K.H."/>
            <person name="Hance I.R."/>
            <person name="Nelson K.E."/>
            <person name="Fraser C.M."/>
        </authorList>
    </citation>
    <scope>NUCLEOTIDE SEQUENCE [LARGE SCALE GENOMIC DNA]</scope>
    <source>
        <strain>COL</strain>
    </source>
</reference>
<sequence length="570" mass="64144">MTEPIISFKDFSFQYHSQATPTLQNINVDIYPGEKVLVVGASGSGKSTFANCINGLIPFKTKGNITGELYINNQDATVSCLHDRSNVVGTVLQDTDGQFIGLTAAEDMAFLLENNCVEQDDMKKNVSYWAEKVGMIEHLNHRPQDLSGGQKQRVSLGGILIHRTPILILDEPLANLDPATGHETLRLLNNIHEETKSTMIIVEHRLEESLDDTFDRVLLFKDGKIIANTTPSDLLKSSKLKEAGIREPLYCTALKYAEVDVESIDNLANLRDVCMSEHVKFKVKKWIDETSANNDNKYKSEPLLELNEVCVQYSDYSNSVLNNVQLNVYRREMLSIVGHNGAGKSTLAKAICGFLDITGNIQFCNRGFNQLSISERSEFVGYVMQNPNHMISEKMIYDEVALGLRARGMKESDIKIRVENVLKICGLYAFRNWPIAALSYGQKKRVTIASVLVLNPEIIILDEPTAGQDFYHYNEIMSFLIELNRQGKTIIMITHDMHLLSEYSSRTVVLSKGQVVADTTPVLVLNDKKICEIASLRQTSLFEMAEYIGISEPQKLVQLFINHDRKVRRQ</sequence>
<comment type="function">
    <text evidence="1">Probably part of an ABC transporter complex. Responsible for energy coupling to the transport system (By similarity).</text>
</comment>
<comment type="subcellular location">
    <subcellularLocation>
        <location evidence="1">Cell membrane</location>
        <topology evidence="1">Peripheral membrane protein</topology>
    </subcellularLocation>
</comment>
<comment type="similarity">
    <text evidence="3">Belongs to the ABC transporter superfamily.</text>
</comment>
<proteinExistence type="inferred from homology"/>
<feature type="chain" id="PRO_0000092064" description="Putative ABC transporter ATP-binding protein SACOL2708">
    <location>
        <begin position="1"/>
        <end position="570"/>
    </location>
</feature>
<feature type="domain" description="ABC transporter 1" evidence="2">
    <location>
        <begin position="6"/>
        <end position="247"/>
    </location>
</feature>
<feature type="domain" description="ABC transporter 2" evidence="2">
    <location>
        <begin position="304"/>
        <end position="537"/>
    </location>
</feature>
<feature type="binding site" evidence="2">
    <location>
        <begin position="40"/>
        <end position="47"/>
    </location>
    <ligand>
        <name>ATP</name>
        <dbReference type="ChEBI" id="CHEBI:30616"/>
        <label>1</label>
    </ligand>
</feature>
<feature type="binding site" evidence="2">
    <location>
        <begin position="338"/>
        <end position="345"/>
    </location>
    <ligand>
        <name>ATP</name>
        <dbReference type="ChEBI" id="CHEBI:30616"/>
        <label>2</label>
    </ligand>
</feature>
<dbReference type="EC" id="7.-.-.-"/>
<dbReference type="EMBL" id="CP000046">
    <property type="protein sequence ID" value="AAW37356.1"/>
    <property type="molecule type" value="Genomic_DNA"/>
</dbReference>
<dbReference type="RefSeq" id="WP_000138655.1">
    <property type="nucleotide sequence ID" value="NZ_JBGOFO010000001.1"/>
</dbReference>
<dbReference type="SMR" id="Q5HCL3"/>
<dbReference type="KEGG" id="sac:SACOL2708"/>
<dbReference type="HOGENOM" id="CLU_000604_86_7_9"/>
<dbReference type="Proteomes" id="UP000000530">
    <property type="component" value="Chromosome"/>
</dbReference>
<dbReference type="GO" id="GO:0043190">
    <property type="term" value="C:ATP-binding cassette (ABC) transporter complex"/>
    <property type="evidence" value="ECO:0007669"/>
    <property type="project" value="TreeGrafter"/>
</dbReference>
<dbReference type="GO" id="GO:0005524">
    <property type="term" value="F:ATP binding"/>
    <property type="evidence" value="ECO:0007669"/>
    <property type="project" value="UniProtKB-KW"/>
</dbReference>
<dbReference type="GO" id="GO:0016887">
    <property type="term" value="F:ATP hydrolysis activity"/>
    <property type="evidence" value="ECO:0007669"/>
    <property type="project" value="InterPro"/>
</dbReference>
<dbReference type="GO" id="GO:0042626">
    <property type="term" value="F:ATPase-coupled transmembrane transporter activity"/>
    <property type="evidence" value="ECO:0007669"/>
    <property type="project" value="TreeGrafter"/>
</dbReference>
<dbReference type="CDD" id="cd03225">
    <property type="entry name" value="ABC_cobalt_CbiO_domain1"/>
    <property type="match status" value="2"/>
</dbReference>
<dbReference type="FunFam" id="3.40.50.300:FF:001422">
    <property type="entry name" value="Cobalt ABC transporter ATP-binding protein"/>
    <property type="match status" value="1"/>
</dbReference>
<dbReference type="FunFam" id="3.40.50.300:FF:000224">
    <property type="entry name" value="Energy-coupling factor transporter ATP-binding protein EcfA"/>
    <property type="match status" value="1"/>
</dbReference>
<dbReference type="Gene3D" id="3.40.50.300">
    <property type="entry name" value="P-loop containing nucleotide triphosphate hydrolases"/>
    <property type="match status" value="2"/>
</dbReference>
<dbReference type="InterPro" id="IPR003593">
    <property type="entry name" value="AAA+_ATPase"/>
</dbReference>
<dbReference type="InterPro" id="IPR022216">
    <property type="entry name" value="ABC_Co_transporter"/>
</dbReference>
<dbReference type="InterPro" id="IPR003439">
    <property type="entry name" value="ABC_transporter-like_ATP-bd"/>
</dbReference>
<dbReference type="InterPro" id="IPR017871">
    <property type="entry name" value="ABC_transporter-like_CS"/>
</dbReference>
<dbReference type="InterPro" id="IPR015856">
    <property type="entry name" value="ABC_transpr_CbiO/EcfA_su"/>
</dbReference>
<dbReference type="InterPro" id="IPR050095">
    <property type="entry name" value="ECF_ABC_transporter_ATP-bd"/>
</dbReference>
<dbReference type="InterPro" id="IPR027417">
    <property type="entry name" value="P-loop_NTPase"/>
</dbReference>
<dbReference type="NCBIfam" id="NF010167">
    <property type="entry name" value="PRK13648.1"/>
    <property type="match status" value="2"/>
</dbReference>
<dbReference type="PANTHER" id="PTHR43553:SF26">
    <property type="entry name" value="ABC TRANSPORTER ATP-BINDING PROTEIN BC_2655-RELATED"/>
    <property type="match status" value="1"/>
</dbReference>
<dbReference type="PANTHER" id="PTHR43553">
    <property type="entry name" value="HEAVY METAL TRANSPORTER"/>
    <property type="match status" value="1"/>
</dbReference>
<dbReference type="Pfam" id="PF00005">
    <property type="entry name" value="ABC_tran"/>
    <property type="match status" value="2"/>
</dbReference>
<dbReference type="Pfam" id="PF12558">
    <property type="entry name" value="DUF3744"/>
    <property type="match status" value="1"/>
</dbReference>
<dbReference type="SMART" id="SM00382">
    <property type="entry name" value="AAA"/>
    <property type="match status" value="2"/>
</dbReference>
<dbReference type="SUPFAM" id="SSF52540">
    <property type="entry name" value="P-loop containing nucleoside triphosphate hydrolases"/>
    <property type="match status" value="2"/>
</dbReference>
<dbReference type="PROSITE" id="PS00211">
    <property type="entry name" value="ABC_TRANSPORTER_1"/>
    <property type="match status" value="2"/>
</dbReference>
<dbReference type="PROSITE" id="PS50893">
    <property type="entry name" value="ABC_TRANSPORTER_2"/>
    <property type="match status" value="2"/>
</dbReference>
<organism>
    <name type="scientific">Staphylococcus aureus (strain COL)</name>
    <dbReference type="NCBI Taxonomy" id="93062"/>
    <lineage>
        <taxon>Bacteria</taxon>
        <taxon>Bacillati</taxon>
        <taxon>Bacillota</taxon>
        <taxon>Bacilli</taxon>
        <taxon>Bacillales</taxon>
        <taxon>Staphylococcaceae</taxon>
        <taxon>Staphylococcus</taxon>
    </lineage>
</organism>
<keyword id="KW-0067">ATP-binding</keyword>
<keyword id="KW-1003">Cell membrane</keyword>
<keyword id="KW-0472">Membrane</keyword>
<keyword id="KW-0547">Nucleotide-binding</keyword>
<keyword id="KW-0677">Repeat</keyword>
<keyword id="KW-1278">Translocase</keyword>
<keyword id="KW-0813">Transport</keyword>
<name>Y2708_STAAC</name>
<evidence type="ECO:0000250" key="1"/>
<evidence type="ECO:0000255" key="2">
    <source>
        <dbReference type="PROSITE-ProRule" id="PRU00434"/>
    </source>
</evidence>
<evidence type="ECO:0000305" key="3"/>